<organism>
    <name type="scientific">Tolumonas auensis (strain DSM 9187 / NBRC 110442 / TA 4)</name>
    <dbReference type="NCBI Taxonomy" id="595494"/>
    <lineage>
        <taxon>Bacteria</taxon>
        <taxon>Pseudomonadati</taxon>
        <taxon>Pseudomonadota</taxon>
        <taxon>Gammaproteobacteria</taxon>
        <taxon>Aeromonadales</taxon>
        <taxon>Aeromonadaceae</taxon>
        <taxon>Tolumonas</taxon>
    </lineage>
</organism>
<evidence type="ECO:0000255" key="1">
    <source>
        <dbReference type="HAMAP-Rule" id="MF_00605"/>
    </source>
</evidence>
<feature type="chain" id="PRO_1000212235" description="tRNA (guanine-N(1)-)-methyltransferase">
    <location>
        <begin position="1"/>
        <end position="249"/>
    </location>
</feature>
<feature type="binding site" evidence="1">
    <location>
        <position position="113"/>
    </location>
    <ligand>
        <name>S-adenosyl-L-methionine</name>
        <dbReference type="ChEBI" id="CHEBI:59789"/>
    </ligand>
</feature>
<feature type="binding site" evidence="1">
    <location>
        <begin position="133"/>
        <end position="138"/>
    </location>
    <ligand>
        <name>S-adenosyl-L-methionine</name>
        <dbReference type="ChEBI" id="CHEBI:59789"/>
    </ligand>
</feature>
<dbReference type="EC" id="2.1.1.228" evidence="1"/>
<dbReference type="EMBL" id="CP001616">
    <property type="protein sequence ID" value="ACQ94556.1"/>
    <property type="molecule type" value="Genomic_DNA"/>
</dbReference>
<dbReference type="RefSeq" id="WP_015880005.1">
    <property type="nucleotide sequence ID" value="NC_012691.1"/>
</dbReference>
<dbReference type="SMR" id="C4LD25"/>
<dbReference type="STRING" id="595494.Tola_2967"/>
<dbReference type="KEGG" id="tau:Tola_2967"/>
<dbReference type="eggNOG" id="COG0336">
    <property type="taxonomic scope" value="Bacteria"/>
</dbReference>
<dbReference type="HOGENOM" id="CLU_047363_0_1_6"/>
<dbReference type="OrthoDB" id="9807416at2"/>
<dbReference type="Proteomes" id="UP000009073">
    <property type="component" value="Chromosome"/>
</dbReference>
<dbReference type="GO" id="GO:0005829">
    <property type="term" value="C:cytosol"/>
    <property type="evidence" value="ECO:0007669"/>
    <property type="project" value="TreeGrafter"/>
</dbReference>
<dbReference type="GO" id="GO:0052906">
    <property type="term" value="F:tRNA (guanine(37)-N1)-methyltransferase activity"/>
    <property type="evidence" value="ECO:0007669"/>
    <property type="project" value="UniProtKB-UniRule"/>
</dbReference>
<dbReference type="GO" id="GO:0002939">
    <property type="term" value="P:tRNA N1-guanine methylation"/>
    <property type="evidence" value="ECO:0007669"/>
    <property type="project" value="TreeGrafter"/>
</dbReference>
<dbReference type="CDD" id="cd18080">
    <property type="entry name" value="TrmD-like"/>
    <property type="match status" value="1"/>
</dbReference>
<dbReference type="FunFam" id="1.10.1270.20:FF:000001">
    <property type="entry name" value="tRNA (guanine-N(1)-)-methyltransferase"/>
    <property type="match status" value="1"/>
</dbReference>
<dbReference type="FunFam" id="3.40.1280.10:FF:000001">
    <property type="entry name" value="tRNA (guanine-N(1)-)-methyltransferase"/>
    <property type="match status" value="1"/>
</dbReference>
<dbReference type="Gene3D" id="3.40.1280.10">
    <property type="match status" value="1"/>
</dbReference>
<dbReference type="Gene3D" id="1.10.1270.20">
    <property type="entry name" value="tRNA(m1g37)methyltransferase, domain 2"/>
    <property type="match status" value="1"/>
</dbReference>
<dbReference type="HAMAP" id="MF_00605">
    <property type="entry name" value="TrmD"/>
    <property type="match status" value="1"/>
</dbReference>
<dbReference type="InterPro" id="IPR029028">
    <property type="entry name" value="Alpha/beta_knot_MTases"/>
</dbReference>
<dbReference type="InterPro" id="IPR023148">
    <property type="entry name" value="tRNA_m1G_MeTrfase_C_sf"/>
</dbReference>
<dbReference type="InterPro" id="IPR002649">
    <property type="entry name" value="tRNA_m1G_MeTrfase_TrmD"/>
</dbReference>
<dbReference type="InterPro" id="IPR029026">
    <property type="entry name" value="tRNA_m1G_MTases_N"/>
</dbReference>
<dbReference type="InterPro" id="IPR016009">
    <property type="entry name" value="tRNA_MeTrfase_TRMD/TRM10"/>
</dbReference>
<dbReference type="NCBIfam" id="NF000648">
    <property type="entry name" value="PRK00026.1"/>
    <property type="match status" value="1"/>
</dbReference>
<dbReference type="NCBIfam" id="TIGR00088">
    <property type="entry name" value="trmD"/>
    <property type="match status" value="1"/>
</dbReference>
<dbReference type="PANTHER" id="PTHR46417">
    <property type="entry name" value="TRNA (GUANINE-N(1)-)-METHYLTRANSFERASE"/>
    <property type="match status" value="1"/>
</dbReference>
<dbReference type="PANTHER" id="PTHR46417:SF1">
    <property type="entry name" value="TRNA (GUANINE-N(1)-)-METHYLTRANSFERASE"/>
    <property type="match status" value="1"/>
</dbReference>
<dbReference type="Pfam" id="PF01746">
    <property type="entry name" value="tRNA_m1G_MT"/>
    <property type="match status" value="1"/>
</dbReference>
<dbReference type="PIRSF" id="PIRSF000386">
    <property type="entry name" value="tRNA_mtase"/>
    <property type="match status" value="1"/>
</dbReference>
<dbReference type="SUPFAM" id="SSF75217">
    <property type="entry name" value="alpha/beta knot"/>
    <property type="match status" value="1"/>
</dbReference>
<name>TRMD_TOLAT</name>
<proteinExistence type="inferred from homology"/>
<gene>
    <name evidence="1" type="primary">trmD</name>
    <name type="ordered locus">Tola_2967</name>
</gene>
<comment type="function">
    <text evidence="1">Specifically methylates guanosine-37 in various tRNAs.</text>
</comment>
<comment type="catalytic activity">
    <reaction evidence="1">
        <text>guanosine(37) in tRNA + S-adenosyl-L-methionine = N(1)-methylguanosine(37) in tRNA + S-adenosyl-L-homocysteine + H(+)</text>
        <dbReference type="Rhea" id="RHEA:36899"/>
        <dbReference type="Rhea" id="RHEA-COMP:10145"/>
        <dbReference type="Rhea" id="RHEA-COMP:10147"/>
        <dbReference type="ChEBI" id="CHEBI:15378"/>
        <dbReference type="ChEBI" id="CHEBI:57856"/>
        <dbReference type="ChEBI" id="CHEBI:59789"/>
        <dbReference type="ChEBI" id="CHEBI:73542"/>
        <dbReference type="ChEBI" id="CHEBI:74269"/>
        <dbReference type="EC" id="2.1.1.228"/>
    </reaction>
</comment>
<comment type="subunit">
    <text evidence="1">Homodimer.</text>
</comment>
<comment type="subcellular location">
    <subcellularLocation>
        <location evidence="1">Cytoplasm</location>
    </subcellularLocation>
</comment>
<comment type="similarity">
    <text evidence="1">Belongs to the RNA methyltransferase TrmD family.</text>
</comment>
<reference key="1">
    <citation type="submission" date="2009-05" db="EMBL/GenBank/DDBJ databases">
        <title>Complete sequence of Tolumonas auensis DSM 9187.</title>
        <authorList>
            <consortium name="US DOE Joint Genome Institute"/>
            <person name="Lucas S."/>
            <person name="Copeland A."/>
            <person name="Lapidus A."/>
            <person name="Glavina del Rio T."/>
            <person name="Tice H."/>
            <person name="Bruce D."/>
            <person name="Goodwin L."/>
            <person name="Pitluck S."/>
            <person name="Chertkov O."/>
            <person name="Brettin T."/>
            <person name="Detter J.C."/>
            <person name="Han C."/>
            <person name="Larimer F."/>
            <person name="Land M."/>
            <person name="Hauser L."/>
            <person name="Kyrpides N."/>
            <person name="Mikhailova N."/>
            <person name="Spring S."/>
            <person name="Beller H."/>
        </authorList>
    </citation>
    <scope>NUCLEOTIDE SEQUENCE [LARGE SCALE GENOMIC DNA]</scope>
    <source>
        <strain>DSM 9187 / NBRC 110442 / TA 4</strain>
    </source>
</reference>
<sequence length="249" mass="27825">MWIGVISLFPDMFRAITDFGVTGRAVKRGLLDINYWNPRDFAHDKHRTVDDRPYGGGPGMLMMVQPLRDAIQAAKQAAGDDVKVIYLSPQGKKLTQSGVTELARCKKLILVAGRYEGIDERIIQSDIDEEWSVGDYVLSGGELPAMTLVDAVSRLVPGVLGDMASAEQDSFTDGLLDCPHYTRPESLDGVVVPDVLLSGNHEYIRRWRLKQSLGRTWQRRPELLDNLALTDEQAKLLAQYVQELNAEQQ</sequence>
<protein>
    <recommendedName>
        <fullName evidence="1">tRNA (guanine-N(1)-)-methyltransferase</fullName>
        <ecNumber evidence="1">2.1.1.228</ecNumber>
    </recommendedName>
    <alternativeName>
        <fullName evidence="1">M1G-methyltransferase</fullName>
    </alternativeName>
    <alternativeName>
        <fullName evidence="1">tRNA [GM37] methyltransferase</fullName>
    </alternativeName>
</protein>
<accession>C4LD25</accession>
<keyword id="KW-0963">Cytoplasm</keyword>
<keyword id="KW-0489">Methyltransferase</keyword>
<keyword id="KW-1185">Reference proteome</keyword>
<keyword id="KW-0949">S-adenosyl-L-methionine</keyword>
<keyword id="KW-0808">Transferase</keyword>
<keyword id="KW-0819">tRNA processing</keyword>